<reference key="1">
    <citation type="journal article" date="2012" name="Med. Chem. Commun.">
        <title>Comparative analysis of the biosynthetic systems for fungal bicyclo[2.2.2]diazaoctane indole alkaloids: the (+)/(-)-notoamide, paraherquamide and malbrancheamide pathways.</title>
        <authorList>
            <person name="Li S."/>
            <person name="Anand K."/>
            <person name="Tran H."/>
            <person name="Yu F."/>
            <person name="Finefield J.M."/>
            <person name="Sunderhaus J.D."/>
            <person name="McAfoos T.J."/>
            <person name="Tsukamoto S."/>
            <person name="Williams R.M."/>
            <person name="Sherman D.H."/>
        </authorList>
    </citation>
    <scope>NUCLEOTIDE SEQUENCE [GENOMIC DNA]</scope>
    <scope>FUNCTION</scope>
    <scope>DOMAIN</scope>
    <scope>PATHWAY</scope>
    <source>
        <strain>ATCC 20841 / MF5123</strain>
    </source>
</reference>
<reference evidence="9" key="2">
    <citation type="journal article" date="2019" name="Nat. Chem.">
        <title>Fungal indole alkaloid biogenesis through evolution of a bifunctional reductase/Diels-Alderase.</title>
        <authorList>
            <person name="Dan Q."/>
            <person name="Newmister S.A."/>
            <person name="Klas K.R."/>
            <person name="Fraley A.E."/>
            <person name="McAfoos T.J."/>
            <person name="Somoza A.D."/>
            <person name="Sunderhaus J.D."/>
            <person name="Ye Y."/>
            <person name="Shende V.V."/>
            <person name="Yu F."/>
            <person name="Sanders J.N."/>
            <person name="Brown W.C."/>
            <person name="Zhao L."/>
            <person name="Paton R.S."/>
            <person name="Houk K.N."/>
            <person name="Smith J.L."/>
            <person name="Sherman D.H."/>
            <person name="Williams R.M."/>
        </authorList>
    </citation>
    <scope>X-RAY CRYSTALLOGRAPHY (2.6 ANGSTROMS) OF 2016-2449 IN COMPLEX WITH NADPH</scope>
    <scope>FUNCTION</scope>
    <scope>CATALYTIC ACTIVITY</scope>
    <scope>PATHWAY</scope>
</reference>
<protein>
    <recommendedName>
        <fullName evidence="6">Nonribisomal peptide synthetase phqB</fullName>
        <shortName evidence="6">NRPS malG</shortName>
        <ecNumber evidence="5">1.-.-.-</ecNumber>
        <ecNumber evidence="8">6.3.1.-</ecNumber>
    </recommendedName>
    <alternativeName>
        <fullName evidence="6">Paraherquamide biosynthesis cluster protein B</fullName>
    </alternativeName>
</protein>
<keyword id="KW-0002">3D-structure</keyword>
<keyword id="KW-0017">Alkaloid metabolism</keyword>
<keyword id="KW-0413">Isomerase</keyword>
<keyword id="KW-0436">Ligase</keyword>
<keyword id="KW-0511">Multifunctional enzyme</keyword>
<keyword id="KW-0560">Oxidoreductase</keyword>
<keyword id="KW-0596">Phosphopantetheine</keyword>
<keyword id="KW-0597">Phosphoprotein</keyword>
<keyword id="KW-0677">Repeat</keyword>
<organism>
    <name type="scientific">Penicillium fellutanum</name>
    <dbReference type="NCBI Taxonomy" id="70095"/>
    <lineage>
        <taxon>Eukaryota</taxon>
        <taxon>Fungi</taxon>
        <taxon>Dikarya</taxon>
        <taxon>Ascomycota</taxon>
        <taxon>Pezizomycotina</taxon>
        <taxon>Eurotiomycetes</taxon>
        <taxon>Eurotiomycetidae</taxon>
        <taxon>Eurotiales</taxon>
        <taxon>Aspergillaceae</taxon>
        <taxon>Penicillium</taxon>
    </lineage>
</organism>
<evidence type="ECO:0000250" key="1">
    <source>
        <dbReference type="UniProtKB" id="A0A144KPJ6"/>
    </source>
</evidence>
<evidence type="ECO:0000255" key="2"/>
<evidence type="ECO:0000255" key="3">
    <source>
        <dbReference type="PROSITE-ProRule" id="PRU00258"/>
    </source>
</evidence>
<evidence type="ECO:0000269" key="4">
    <source>
    </source>
</evidence>
<evidence type="ECO:0000269" key="5">
    <source>
    </source>
</evidence>
<evidence type="ECO:0000303" key="6">
    <source>
    </source>
</evidence>
<evidence type="ECO:0000305" key="7"/>
<evidence type="ECO:0000305" key="8">
    <source>
    </source>
</evidence>
<evidence type="ECO:0007744" key="9">
    <source>
        <dbReference type="PDB" id="6NKI"/>
    </source>
</evidence>
<evidence type="ECO:0007829" key="10">
    <source>
        <dbReference type="PDB" id="6NKI"/>
    </source>
</evidence>
<feature type="chain" id="PRO_0000448866" description="Nonribisomal peptide synthetase phqB">
    <location>
        <begin position="1"/>
        <end position="2449"/>
    </location>
</feature>
<feature type="domain" description="Carrier 1" evidence="3">
    <location>
        <begin position="795"/>
        <end position="870"/>
    </location>
</feature>
<feature type="domain" description="Carrier 2" evidence="3">
    <location>
        <begin position="1915"/>
        <end position="1993"/>
    </location>
</feature>
<feature type="region of interest" description="Adenylation 1" evidence="2">
    <location>
        <begin position="253"/>
        <end position="654"/>
    </location>
</feature>
<feature type="region of interest" description="Condensation 1" evidence="2">
    <location>
        <begin position="913"/>
        <end position="1337"/>
    </location>
</feature>
<feature type="region of interest" description="Adenylation 2" evidence="2">
    <location>
        <begin position="1357"/>
        <end position="1756"/>
    </location>
</feature>
<feature type="region of interest" description="Reductase (R) domain" evidence="2 5">
    <location>
        <begin position="2041"/>
        <end position="2297"/>
    </location>
</feature>
<feature type="binding site" evidence="9">
    <location>
        <position position="2045"/>
    </location>
    <ligand>
        <name>NADPH</name>
        <dbReference type="ChEBI" id="CHEBI:57783"/>
    </ligand>
</feature>
<feature type="binding site" evidence="9">
    <location>
        <position position="2249"/>
    </location>
    <ligand>
        <name>NADPH</name>
        <dbReference type="ChEBI" id="CHEBI:57783"/>
    </ligand>
</feature>
<feature type="binding site" evidence="9">
    <location>
        <position position="2259"/>
    </location>
    <ligand>
        <name>NADPH</name>
        <dbReference type="ChEBI" id="CHEBI:57783"/>
    </ligand>
</feature>
<feature type="modified residue" description="O-(pantetheine 4'-phosphoryl)serine" evidence="3">
    <location>
        <position position="815"/>
    </location>
</feature>
<feature type="modified residue" description="O-(pantetheine 4'-phosphoryl)serine" evidence="3">
    <location>
        <position position="1952"/>
    </location>
</feature>
<feature type="helix" evidence="10">
    <location>
        <begin position="2019"/>
        <end position="2028"/>
    </location>
</feature>
<feature type="strand" evidence="10">
    <location>
        <begin position="2037"/>
        <end position="2042"/>
    </location>
</feature>
<feature type="helix" evidence="10">
    <location>
        <begin position="2047"/>
        <end position="2058"/>
    </location>
</feature>
<feature type="strand" evidence="10">
    <location>
        <begin position="2059"/>
        <end position="2073"/>
    </location>
</feature>
<feature type="helix" evidence="10">
    <location>
        <begin position="2074"/>
        <end position="2087"/>
    </location>
</feature>
<feature type="helix" evidence="10">
    <location>
        <begin position="2093"/>
        <end position="2098"/>
    </location>
</feature>
<feature type="strand" evidence="10">
    <location>
        <begin position="2099"/>
        <end position="2103"/>
    </location>
</feature>
<feature type="helix" evidence="10">
    <location>
        <begin position="2109"/>
        <end position="2112"/>
    </location>
</feature>
<feature type="helix" evidence="10">
    <location>
        <begin position="2115"/>
        <end position="2118"/>
    </location>
</feature>
<feature type="strand" evidence="10">
    <location>
        <begin position="2137"/>
        <end position="2140"/>
    </location>
</feature>
<feature type="helix" evidence="10">
    <location>
        <begin position="2151"/>
        <end position="2171"/>
    </location>
</feature>
<feature type="strand" evidence="10">
    <location>
        <begin position="2177"/>
        <end position="2181"/>
    </location>
</feature>
<feature type="helix" evidence="10">
    <location>
        <begin position="2217"/>
        <end position="2235"/>
    </location>
</feature>
<feature type="strand" evidence="10">
    <location>
        <begin position="2241"/>
        <end position="2245"/>
    </location>
</feature>
<feature type="strand" evidence="10">
    <location>
        <begin position="2248"/>
        <end position="2250"/>
    </location>
</feature>
<feature type="helix" evidence="10">
    <location>
        <begin position="2263"/>
        <end position="2274"/>
    </location>
</feature>
<feature type="strand" evidence="10">
    <location>
        <begin position="2276"/>
        <end position="2278"/>
    </location>
</feature>
<feature type="turn" evidence="10">
    <location>
        <begin position="2280"/>
        <end position="2283"/>
    </location>
</feature>
<feature type="strand" evidence="10">
    <location>
        <begin position="2284"/>
        <end position="2290"/>
    </location>
</feature>
<feature type="helix" evidence="10">
    <location>
        <begin position="2291"/>
        <end position="2303"/>
    </location>
</feature>
<feature type="strand" evidence="10">
    <location>
        <begin position="2325"/>
        <end position="2327"/>
    </location>
</feature>
<feature type="strand" evidence="10">
    <location>
        <begin position="2331"/>
        <end position="2333"/>
    </location>
</feature>
<feature type="helix" evidence="10">
    <location>
        <begin position="2334"/>
        <end position="2345"/>
    </location>
</feature>
<feature type="strand" evidence="10">
    <location>
        <begin position="2350"/>
        <end position="2352"/>
    </location>
</feature>
<feature type="helix" evidence="10">
    <location>
        <begin position="2354"/>
        <end position="2366"/>
    </location>
</feature>
<feature type="turn" evidence="10">
    <location>
        <begin position="2367"/>
        <end position="2371"/>
    </location>
</feature>
<feature type="turn" evidence="10">
    <location>
        <begin position="2373"/>
        <end position="2377"/>
    </location>
</feature>
<feature type="helix" evidence="10">
    <location>
        <begin position="2378"/>
        <end position="2384"/>
    </location>
</feature>
<feature type="strand" evidence="10">
    <location>
        <begin position="2394"/>
        <end position="2396"/>
    </location>
</feature>
<feature type="helix" evidence="10">
    <location>
        <begin position="2404"/>
        <end position="2425"/>
    </location>
</feature>
<proteinExistence type="evidence at protein level"/>
<accession>L0E2U2</accession>
<name>PHQB_PENFE</name>
<gene>
    <name evidence="6" type="primary">phqB</name>
</gene>
<comment type="function">
    <text evidence="4 5 8">Nonribisomal peptide synthetase; part of the gene cluster that mediates the biosynthesis of paraherquamide, a fungal indole alkaloid that belongs to a family of natural products containing a characteristic bicyclo[2.2.2]diazaoctane core (PubMed:23213353). The first steps in the biosynthesis of paraherquamide is the production of the beta-methyl-proline precursor from L-isoleucine (Probable). They require oxidation of a terminally hydroxylated L-isoleucine to the corresponding aldehyde by enzymes which have still to be identified (Probable). Spontaneous cyclization and dehydration would yield the 4-methyl pyrolline-5-carboxylic acid, which is then reduced by the pyrroline-5-carboxylate reductase phqD leading to the beta-methyl-proline precursor (Probable). The next step of paraherquamide biosynthesis involves coupling of beta-methyl-proline and L-tryptophan by the bimodular NRPS phqB, to produce a monooxopiperazine intermediate (Probable). The reductase (R) domain of phqB utilizes NADPH for hydride transfer to reduce the thioester bond of the T domain-tethered linear dipeptide to a hemithioaminal intermediate, which spontaneously cleaves the C-S bond to release the aldehyde product (PubMed:31548667). This compound undergoes spontaneous cyclization and dehydration to give a dienamine which is reverse prenylated at C-2 by the reverse prenyltransferase phqJ (Probable). The other prenyltransferase present in the cluster, phqI may be a redundant gene in the pathway (Probable). During biosynthetic assembly, the key step to produce the polycyclic core is catalyzed by the bifunctional reductase and intramolecular [4+2] Diels-Alderase, phqE, resulting in formation of the [2.2.2] diazaoctane intermediate preparaherquamide (PubMed:31548667). Following formation of preparaherquamide, an indole 2,3-epoxidation-initiated pinacol-like rearrangement is catalyzed by the phqK FAD-dependent monooxygenase (Probable). The prenyltransferase phqA, the cytochrome P450 monooxygenase phqL, and the FAD-linked oxidoreductase phqH (or the cytochrome P450 monooxygenase phqM), are proposed to be involved in the formation of the pyran ring (Probable). The FAD-dependent monooxygenase phqK is likely responsible for generation of the spiro-oxindole, and the N-methylation is likely mediated by the phqN methyltransferase leading to the isolable natural product paraherquamide F (Probable). However, the order of these biosynthetic steps has still to be determined (Probable). In late-stage paraherquamide biosynthesis, the third P450 monooxygenase, phqO, is probably responsible for the C-14 hydroxylation, transforming paraherquamide F to paraherquamide G, and paraherquamide E to the final product paraherquamide A (Probable). The expansion from the 6-membered ring pyran (in paraherquamides F and G) to the 7-membered dioxepin ring (in paraherquamides A and E) represents a poorly understood but intriguing process that probably involves the 2-oxoglutarate-dependent dioxygenase phqC (Probable). Finally, the remaining members of the paraherquamide cluster, including phqI as well as phqM (or phqH), do not have a clearly prescribed role and appear to be redundant (Probable).</text>
</comment>
<comment type="pathway">
    <text evidence="5">Alkaloid biosynthesis.</text>
</comment>
<comment type="domain">
    <text evidence="1 8">NRP synthetases are composed of discrete domains (adenylation (A), thiolation (T) or peptidyl carrier protein (PCP) and condensation (C) domains) which when grouped together are referred to as a single module. Each module is responsible for the recognition (via the A domain) and incorporation of a single amino acid into the growing peptide product. Thus, an NRP synthetase is generally composed of one or more modules and can terminate in a thioesterase domain (TE) that releases the newly synthesized peptide from the enzyme. Occasionally, methyltransferase domains (responsible for amino acid methylation) are present within the NRP synthetase (By similarity). PhqB has the following architecture: A1-T1-C1-A2-T2-R. PhqB finishes with a reductase-like domain (R) for peptide release, which is consistent with the monooxopiperazine moiety of paraherquamide (Probable).</text>
</comment>
<comment type="similarity">
    <text evidence="7">Belongs to the NRP synthetase family.</text>
</comment>
<sequence>MAKQGCIRVSVPFPLVYAPTTSDSTNLRASHQGRTTRLPLGSSLSEEYCLISWALLASLYHGSATVLLNGVLPSELGSPCEPCADAIVDMAPDSEIQSLERQMADFLQQIKHIPAESDAANDNPNVVLDFGERTASLLMQSVPSSHSATEESFPPIHDGEGLHLRIICQPSEPDISWFCEVVHDENLVDRDAAQRIAEQFAHIYKQLGSHSRGLQASINDLSLLNTADEHQLIEWNHDPPAIIDACFQDLFAIQVHSGPGRLAVSAWDGELTYGQLDELANQSAQRLLEQNVRPGMVVPLLFEKSKWMAVAMLAVAKVRATAVCICISHPMDLMKRILYQSNPAIILLSRAQEPLIRQIGEYPVLIIPEDLYSSPRSATAEQPVSTAFPSASSDDVAFIVFSSGSTGVPKGIVLSHRAIATAGHYVGDRLQVTSEARVLQFSSYAFDMSIIETWQALTRGACLCIPSETQRLNSMPEFIQQHRVTWAFFTPTTLRNFEPSDFPTLETLTLGGETIPVDLARHWESRVSIFNLWGPAEVGPAGAGPISPTSGWIPGTFGTAAGCISWITMPDDSDSLAPIGTVGEMIIEGAVVADGYLNDPTRTQQVFIEAPRWRERFTEIPVQCRFFRTGDLCHYNPDGTLRYVGRRDTVVKIRGQRVDVDAVELQLRQLDPHVDSVVSAVKFYDAAGAMTLVQFLVDRTGFEIDWSSQRPGESMTALESGSWALSHHYQSLLRPYLPQYMVPSLIIPVKSLPRTATDKVDRRRLCQCFQQFSSSQLMDWLGGNRSRCLAKADSLPMTPNEDVLVKVIASVCKISTSSIDLKASFPQLGGDSTTAIRLTRVLLAYNLLLHTERLLDIECSLRTVAKEARPTDAVTLADGPPPFSLIGVNDANAITCLRRVASQECKIQEEDIQDIYPTTPLQEGLLAVTEIHSGDAYVDRVLFSLPADCSVELAQQAWQNVVQATSILRTRIIQADDGRTYQIVVRPERKIQWQTASSESQFYEKDRARSMGLGSPLVRLTLIQDSEAREQPAKLAVTFHHSVYDAFTLHACIKQAEKAYTSETLFPSTFTGFINHLNQQKLADGERTRQFWLKEMVELQSNVFPALPSPQYLPHTSTSVVYEGCRANATSSKQISSPSAKVRLAWALLISLYTDSPDIVYGTVVDGRRGLGVILGSVLGPTIATLPVRTTIQRESTVEESLAQVQENMKRMIPFEHTGLQRIRNMGHGPATACKFQNLLVIQADDMIPDSPIFGPVEVSVGSINSFPGYALILQVAPSETSWKFEMLVDEAVVPREQAELMLSQLSHLLKQIDDCHTQNLTIAQLDLISDRDSELLSTCLKSIPTCLDSTIVDLVEAQVTRNPSKCAVSACDGDLSYAELQSSARQLAQLLLPLIVGQGIQFIPIFLERSYWVPISMLAVAKLGVAFVLLDPNQPHERNVKICRAISGTLGITSAQMQNLASTVCDGPWISLSTEALISHAQAVPSGTTTTMPPMPNPSPRDLLYAAFTSGSTGEPKAVLIEHASYASAVIAQQNKLEITSSSRVLQLSSYAFDSFAVEILTVLASGGCVCIPSESEIAEDLGHVVEKYRSNWLCITPSVLRLLTPDDVPSLRTVVAVGESMLPGQIKLWCSRVHLYCGYGPTECCTGAAVHRVTSTDADARLIGKGMGAVLWVVDKEDVTRRMPVNTVGELILQGPIVGRGYLNNPKKSTECFLQPPSWAPQFKDRQASRMYRTGDMVRRNLDGTFTFLGRTNQHTKLHGQRIDLAEIERHVLRFFGTDASGIAAILQPTKSDMPPCLVAMVHIPSLAAKVPDISDMNGFSNIAFQSHSHDFALRASRVQQKLRQSFPPVMVPELYLQLPSIPLTISGKVNRRSLLDEATELSPVDLHDLGGLSRNESRSTGLLDHTDEPVAWALSKHIGQLLQRKTGHEKMAAEIVGRNVGLSRVGLDSIDIIALSQFISRHYDCSISMTNLFDSTLTVRMVAEMIDRTPNSVPEKALLSPGWWERVQCMIRQINDLPVCQSSRRTIHSRPSGKRLFLTGATGFLGTHILHQLLVDNDVSIVYVLARAPCPRKGLARIIQAARLARWWRNDYRRLIQVWPGDLSQPHLGLADEHWETLSGTESSLNSSIGAVDAIIHCGAVIHWGYDYDTLEAANVRSTFDILQCLNRSPTPIALTYISALIPGDAALATTDTDNHPSMSNGHAVFPPIELTDGYTQTKFASEQLIGAFSARHKAHSLTIVRPGFMIGPVSNAVANGDDLLWRVVTTAMTTCSYNSDESDNWLFVAAVDWVASLIIHETLHARPSSHSVNDNANPLAPSAKAVSIGDGLNMSDFWKAIMLGLGRDLIPSSSQRWMDTVEQQVNEVGTSHPLWPLMGFLRASGGCLGVAPTDPLPVPIYQPPSLTNMIRQAVVRNAEYLASLEDLAASTMLFKRRNKVALGNGLINS</sequence>
<dbReference type="EC" id="1.-.-.-" evidence="5"/>
<dbReference type="EC" id="6.3.1.-" evidence="8"/>
<dbReference type="EMBL" id="JQ708195">
    <property type="protein sequence ID" value="AGA37269.1"/>
    <property type="molecule type" value="Genomic_DNA"/>
</dbReference>
<dbReference type="PDB" id="6NKI">
    <property type="method" value="X-ray"/>
    <property type="resolution" value="2.60 A"/>
    <property type="chains" value="A=2016-2449"/>
</dbReference>
<dbReference type="PDBsum" id="6NKI"/>
<dbReference type="SMR" id="L0E2U2"/>
<dbReference type="GO" id="GO:0005737">
    <property type="term" value="C:cytoplasm"/>
    <property type="evidence" value="ECO:0007669"/>
    <property type="project" value="TreeGrafter"/>
</dbReference>
<dbReference type="GO" id="GO:0016853">
    <property type="term" value="F:isomerase activity"/>
    <property type="evidence" value="ECO:0007669"/>
    <property type="project" value="UniProtKB-KW"/>
</dbReference>
<dbReference type="GO" id="GO:0016874">
    <property type="term" value="F:ligase activity"/>
    <property type="evidence" value="ECO:0007669"/>
    <property type="project" value="UniProtKB-KW"/>
</dbReference>
<dbReference type="GO" id="GO:0016491">
    <property type="term" value="F:oxidoreductase activity"/>
    <property type="evidence" value="ECO:0007669"/>
    <property type="project" value="UniProtKB-KW"/>
</dbReference>
<dbReference type="GO" id="GO:0031177">
    <property type="term" value="F:phosphopantetheine binding"/>
    <property type="evidence" value="ECO:0007669"/>
    <property type="project" value="TreeGrafter"/>
</dbReference>
<dbReference type="GO" id="GO:0009820">
    <property type="term" value="P:alkaloid metabolic process"/>
    <property type="evidence" value="ECO:0007669"/>
    <property type="project" value="UniProtKB-KW"/>
</dbReference>
<dbReference type="GO" id="GO:0043041">
    <property type="term" value="P:amino acid activation for nonribosomal peptide biosynthetic process"/>
    <property type="evidence" value="ECO:0007669"/>
    <property type="project" value="TreeGrafter"/>
</dbReference>
<dbReference type="GO" id="GO:0044550">
    <property type="term" value="P:secondary metabolite biosynthetic process"/>
    <property type="evidence" value="ECO:0007669"/>
    <property type="project" value="TreeGrafter"/>
</dbReference>
<dbReference type="CDD" id="cd05918">
    <property type="entry name" value="A_NRPS_SidN3_like"/>
    <property type="match status" value="2"/>
</dbReference>
<dbReference type="CDD" id="cd19545">
    <property type="entry name" value="FUM14_C_NRPS-like"/>
    <property type="match status" value="1"/>
</dbReference>
<dbReference type="FunFam" id="3.30.300.30:FF:000015">
    <property type="entry name" value="Nonribosomal peptide synthase SidD"/>
    <property type="match status" value="2"/>
</dbReference>
<dbReference type="Gene3D" id="3.30.300.30">
    <property type="match status" value="2"/>
</dbReference>
<dbReference type="Gene3D" id="1.10.1200.10">
    <property type="entry name" value="ACP-like"/>
    <property type="match status" value="1"/>
</dbReference>
<dbReference type="Gene3D" id="3.30.559.10">
    <property type="entry name" value="Chloramphenicol acetyltransferase-like domain"/>
    <property type="match status" value="1"/>
</dbReference>
<dbReference type="Gene3D" id="3.40.50.12780">
    <property type="entry name" value="N-terminal domain of ligase-like"/>
    <property type="match status" value="2"/>
</dbReference>
<dbReference type="Gene3D" id="3.40.50.720">
    <property type="entry name" value="NAD(P)-binding Rossmann-like Domain"/>
    <property type="match status" value="1"/>
</dbReference>
<dbReference type="Gene3D" id="3.30.559.30">
    <property type="entry name" value="Nonribosomal peptide synthetase, condensation domain"/>
    <property type="match status" value="1"/>
</dbReference>
<dbReference type="InterPro" id="IPR036736">
    <property type="entry name" value="ACP-like_sf"/>
</dbReference>
<dbReference type="InterPro" id="IPR045851">
    <property type="entry name" value="AMP-bd_C_sf"/>
</dbReference>
<dbReference type="InterPro" id="IPR020845">
    <property type="entry name" value="AMP-binding_CS"/>
</dbReference>
<dbReference type="InterPro" id="IPR000873">
    <property type="entry name" value="AMP-dep_synth/lig_dom"/>
</dbReference>
<dbReference type="InterPro" id="IPR042099">
    <property type="entry name" value="ANL_N_sf"/>
</dbReference>
<dbReference type="InterPro" id="IPR023213">
    <property type="entry name" value="CAT-like_dom_sf"/>
</dbReference>
<dbReference type="InterPro" id="IPR001242">
    <property type="entry name" value="Condensatn"/>
</dbReference>
<dbReference type="InterPro" id="IPR013120">
    <property type="entry name" value="Far_NAD-bd"/>
</dbReference>
<dbReference type="InterPro" id="IPR036291">
    <property type="entry name" value="NAD(P)-bd_dom_sf"/>
</dbReference>
<dbReference type="InterPro" id="IPR009081">
    <property type="entry name" value="PP-bd_ACP"/>
</dbReference>
<dbReference type="InterPro" id="IPR006162">
    <property type="entry name" value="Ppantetheine_attach_site"/>
</dbReference>
<dbReference type="PANTHER" id="PTHR45527:SF16">
    <property type="entry name" value="NONRIBOSOMAL PEPTIDE SYNTHASE ATNA-RELATED"/>
    <property type="match status" value="1"/>
</dbReference>
<dbReference type="PANTHER" id="PTHR45527">
    <property type="entry name" value="NONRIBOSOMAL PEPTIDE SYNTHETASE"/>
    <property type="match status" value="1"/>
</dbReference>
<dbReference type="Pfam" id="PF00501">
    <property type="entry name" value="AMP-binding"/>
    <property type="match status" value="2"/>
</dbReference>
<dbReference type="Pfam" id="PF00668">
    <property type="entry name" value="Condensation"/>
    <property type="match status" value="1"/>
</dbReference>
<dbReference type="Pfam" id="PF07993">
    <property type="entry name" value="NAD_binding_4"/>
    <property type="match status" value="1"/>
</dbReference>
<dbReference type="Pfam" id="PF00550">
    <property type="entry name" value="PP-binding"/>
    <property type="match status" value="1"/>
</dbReference>
<dbReference type="SUPFAM" id="SSF56801">
    <property type="entry name" value="Acetyl-CoA synthetase-like"/>
    <property type="match status" value="2"/>
</dbReference>
<dbReference type="SUPFAM" id="SSF47336">
    <property type="entry name" value="ACP-like"/>
    <property type="match status" value="2"/>
</dbReference>
<dbReference type="SUPFAM" id="SSF52777">
    <property type="entry name" value="CoA-dependent acyltransferases"/>
    <property type="match status" value="2"/>
</dbReference>
<dbReference type="SUPFAM" id="SSF51735">
    <property type="entry name" value="NAD(P)-binding Rossmann-fold domains"/>
    <property type="match status" value="1"/>
</dbReference>
<dbReference type="PROSITE" id="PS00455">
    <property type="entry name" value="AMP_BINDING"/>
    <property type="match status" value="1"/>
</dbReference>
<dbReference type="PROSITE" id="PS00012">
    <property type="entry name" value="PHOSPHOPANTETHEINE"/>
    <property type="match status" value="1"/>
</dbReference>